<feature type="chain" id="PRO_1000200778" description="Putative multidrug resistance protein MdtD">
    <location>
        <begin position="1"/>
        <end position="471"/>
    </location>
</feature>
<feature type="topological domain" description="Periplasmic" evidence="1">
    <location>
        <begin position="1"/>
        <end position="11"/>
    </location>
</feature>
<feature type="transmembrane region" description="Helical" evidence="1">
    <location>
        <begin position="12"/>
        <end position="32"/>
    </location>
</feature>
<feature type="topological domain" description="Cytoplasmic" evidence="1">
    <location>
        <begin position="33"/>
        <end position="48"/>
    </location>
</feature>
<feature type="transmembrane region" description="Helical" evidence="1">
    <location>
        <begin position="49"/>
        <end position="69"/>
    </location>
</feature>
<feature type="topological domain" description="Periplasmic" evidence="1">
    <location>
        <begin position="70"/>
        <end position="76"/>
    </location>
</feature>
<feature type="transmembrane region" description="Helical" evidence="1">
    <location>
        <begin position="77"/>
        <end position="97"/>
    </location>
</feature>
<feature type="topological domain" description="Cytoplasmic" evidence="1">
    <location>
        <begin position="98"/>
        <end position="101"/>
    </location>
</feature>
<feature type="transmembrane region" description="Helical" evidence="1">
    <location>
        <begin position="102"/>
        <end position="124"/>
    </location>
</feature>
<feature type="topological domain" description="Periplasmic" evidence="1">
    <location>
        <begin position="125"/>
        <end position="137"/>
    </location>
</feature>
<feature type="transmembrane region" description="Helical" evidence="1">
    <location>
        <begin position="138"/>
        <end position="158"/>
    </location>
</feature>
<feature type="topological domain" description="Cytoplasmic" evidence="1">
    <location>
        <begin position="159"/>
        <end position="164"/>
    </location>
</feature>
<feature type="transmembrane region" description="Helical" evidence="1">
    <location>
        <begin position="165"/>
        <end position="185"/>
    </location>
</feature>
<feature type="topological domain" description="Periplasmic" evidence="1">
    <location>
        <begin position="186"/>
        <end position="196"/>
    </location>
</feature>
<feature type="transmembrane region" description="Helical" evidence="1">
    <location>
        <begin position="197"/>
        <end position="217"/>
    </location>
</feature>
<feature type="topological domain" description="Cytoplasmic" evidence="1">
    <location>
        <begin position="218"/>
        <end position="224"/>
    </location>
</feature>
<feature type="transmembrane region" description="Helical" evidence="1">
    <location>
        <begin position="225"/>
        <end position="245"/>
    </location>
</feature>
<feature type="topological domain" description="Periplasmic" evidence="1">
    <location>
        <begin position="246"/>
        <end position="262"/>
    </location>
</feature>
<feature type="transmembrane region" description="Helical" evidence="1">
    <location>
        <begin position="263"/>
        <end position="283"/>
    </location>
</feature>
<feature type="topological domain" description="Cytoplasmic" evidence="1">
    <location>
        <begin position="284"/>
        <end position="285"/>
    </location>
</feature>
<feature type="transmembrane region" description="Helical" evidence="1">
    <location>
        <begin position="286"/>
        <end position="306"/>
    </location>
</feature>
<feature type="topological domain" description="Periplasmic" evidence="1">
    <location>
        <begin position="307"/>
        <end position="341"/>
    </location>
</feature>
<feature type="transmembrane region" description="Helical" evidence="1">
    <location>
        <begin position="342"/>
        <end position="362"/>
    </location>
</feature>
<feature type="topological domain" description="Cytoplasmic" evidence="1">
    <location>
        <begin position="363"/>
        <end position="395"/>
    </location>
</feature>
<feature type="transmembrane region" description="Helical" evidence="1">
    <location>
        <begin position="396"/>
        <end position="416"/>
    </location>
</feature>
<feature type="topological domain" description="Periplasmic" evidence="1">
    <location>
        <begin position="417"/>
        <end position="430"/>
    </location>
</feature>
<feature type="transmembrane region" description="Helical" evidence="1">
    <location>
        <begin position="431"/>
        <end position="451"/>
    </location>
</feature>
<feature type="topological domain" description="Cytoplasmic" evidence="1">
    <location>
        <begin position="452"/>
        <end position="471"/>
    </location>
</feature>
<reference key="1">
    <citation type="journal article" date="2009" name="PLoS Genet.">
        <title>Organised genome dynamics in the Escherichia coli species results in highly diverse adaptive paths.</title>
        <authorList>
            <person name="Touchon M."/>
            <person name="Hoede C."/>
            <person name="Tenaillon O."/>
            <person name="Barbe V."/>
            <person name="Baeriswyl S."/>
            <person name="Bidet P."/>
            <person name="Bingen E."/>
            <person name="Bonacorsi S."/>
            <person name="Bouchier C."/>
            <person name="Bouvet O."/>
            <person name="Calteau A."/>
            <person name="Chiapello H."/>
            <person name="Clermont O."/>
            <person name="Cruveiller S."/>
            <person name="Danchin A."/>
            <person name="Diard M."/>
            <person name="Dossat C."/>
            <person name="Karoui M.E."/>
            <person name="Frapy E."/>
            <person name="Garry L."/>
            <person name="Ghigo J.M."/>
            <person name="Gilles A.M."/>
            <person name="Johnson J."/>
            <person name="Le Bouguenec C."/>
            <person name="Lescat M."/>
            <person name="Mangenot S."/>
            <person name="Martinez-Jehanne V."/>
            <person name="Matic I."/>
            <person name="Nassif X."/>
            <person name="Oztas S."/>
            <person name="Petit M.A."/>
            <person name="Pichon C."/>
            <person name="Rouy Z."/>
            <person name="Ruf C.S."/>
            <person name="Schneider D."/>
            <person name="Tourret J."/>
            <person name="Vacherie B."/>
            <person name="Vallenet D."/>
            <person name="Medigue C."/>
            <person name="Rocha E.P.C."/>
            <person name="Denamur E."/>
        </authorList>
    </citation>
    <scope>NUCLEOTIDE SEQUENCE [LARGE SCALE GENOMIC DNA]</scope>
    <source>
        <strain>ATCC 35469 / DSM 13698 / BCRC 15582 / CCUG 18766 / IAM 14443 / JCM 21226 / LMG 7866 / NBRC 102419 / NCTC 12128 / CDC 0568-73</strain>
    </source>
</reference>
<proteinExistence type="inferred from homology"/>
<accession>B7LV41</accession>
<organism>
    <name type="scientific">Escherichia fergusonii (strain ATCC 35469 / DSM 13698 / CCUG 18766 / IAM 14443 / JCM 21226 / LMG 7866 / NBRC 102419 / NCTC 12128 / CDC 0568-73)</name>
    <dbReference type="NCBI Taxonomy" id="585054"/>
    <lineage>
        <taxon>Bacteria</taxon>
        <taxon>Pseudomonadati</taxon>
        <taxon>Pseudomonadota</taxon>
        <taxon>Gammaproteobacteria</taxon>
        <taxon>Enterobacterales</taxon>
        <taxon>Enterobacteriaceae</taxon>
        <taxon>Escherichia</taxon>
    </lineage>
</organism>
<sequence>MTDLPDSTRWQLWIVAFGFFMQSLDTTIVNTALPSMAQSLGESPLHMHMVIVSYVLTVAVMLPASGWLADKVGVRNIFFTAIVLFTLGSLFCALSATLNELLLARALQGVGGAMMVPVGRLTVMKIVPREQYMAAMTFVTLPGQVGPLLGPALGGLLVEYASWHWIFLINIPVGIIGAIATLMLMPNYTMQTRRFDLSGFLLLAVGMAVLTLALDGSKGTGLSPLAIAGLAAIGVVALVLYLLHARNNNRALFSLKLFRTRTFSLGLAGSFAGRIGSGMLPFMTPVFLQIGLGFSPFHAGLMMIPMVLGSMGMKRIVVQVVNRFGYRRVLVATTLGLSLVTLLFMTTALLGWYYVLPFVLFLQGMVNSTRFSSMNTLTLKDLPDNLASSGNSLLSMIMQLSMSIGVTIAGLLLGLFGSQHVSVDSSTTQTVFMYTWLSMALIIALPAFIFARVPNDTHQNVAISRRKRSAQ</sequence>
<keyword id="KW-0997">Cell inner membrane</keyword>
<keyword id="KW-1003">Cell membrane</keyword>
<keyword id="KW-0472">Membrane</keyword>
<keyword id="KW-0812">Transmembrane</keyword>
<keyword id="KW-1133">Transmembrane helix</keyword>
<keyword id="KW-0813">Transport</keyword>
<name>MDTD_ESCF3</name>
<evidence type="ECO:0000255" key="1">
    <source>
        <dbReference type="HAMAP-Rule" id="MF_01577"/>
    </source>
</evidence>
<comment type="subcellular location">
    <subcellularLocation>
        <location evidence="1">Cell inner membrane</location>
        <topology evidence="1">Multi-pass membrane protein</topology>
    </subcellularLocation>
</comment>
<comment type="similarity">
    <text evidence="1">Belongs to the major facilitator superfamily. TCR/Tet family.</text>
</comment>
<protein>
    <recommendedName>
        <fullName evidence="1">Putative multidrug resistance protein MdtD</fullName>
    </recommendedName>
</protein>
<gene>
    <name evidence="1" type="primary">mdtD</name>
    <name type="ordered locus">EFER_2164</name>
</gene>
<dbReference type="EMBL" id="CU928158">
    <property type="protein sequence ID" value="CAQ89667.1"/>
    <property type="molecule type" value="Genomic_DNA"/>
</dbReference>
<dbReference type="RefSeq" id="WP_000130825.1">
    <property type="nucleotide sequence ID" value="NC_011740.1"/>
</dbReference>
<dbReference type="SMR" id="B7LV41"/>
<dbReference type="GeneID" id="75056800"/>
<dbReference type="KEGG" id="efe:EFER_2164"/>
<dbReference type="HOGENOM" id="CLU_000960_28_0_6"/>
<dbReference type="OrthoDB" id="9812221at2"/>
<dbReference type="Proteomes" id="UP000000745">
    <property type="component" value="Chromosome"/>
</dbReference>
<dbReference type="GO" id="GO:0005886">
    <property type="term" value="C:plasma membrane"/>
    <property type="evidence" value="ECO:0007669"/>
    <property type="project" value="UniProtKB-SubCell"/>
</dbReference>
<dbReference type="GO" id="GO:0022857">
    <property type="term" value="F:transmembrane transporter activity"/>
    <property type="evidence" value="ECO:0007669"/>
    <property type="project" value="UniProtKB-UniRule"/>
</dbReference>
<dbReference type="CDD" id="cd17503">
    <property type="entry name" value="MFS_LmrB_MDR_like"/>
    <property type="match status" value="1"/>
</dbReference>
<dbReference type="FunFam" id="1.20.1250.20:FF:000021">
    <property type="entry name" value="Putative multidrug resistance protein MdtD"/>
    <property type="match status" value="1"/>
</dbReference>
<dbReference type="FunFam" id="1.20.1720.10:FF:000001">
    <property type="entry name" value="Putative multidrug resistance protein MdtD"/>
    <property type="match status" value="1"/>
</dbReference>
<dbReference type="Gene3D" id="1.20.1250.20">
    <property type="entry name" value="MFS general substrate transporter like domains"/>
    <property type="match status" value="1"/>
</dbReference>
<dbReference type="Gene3D" id="1.20.1720.10">
    <property type="entry name" value="Multidrug resistance protein D"/>
    <property type="match status" value="1"/>
</dbReference>
<dbReference type="HAMAP" id="MF_01577">
    <property type="entry name" value="MFS_MdtD"/>
    <property type="match status" value="1"/>
</dbReference>
<dbReference type="InterPro" id="IPR004638">
    <property type="entry name" value="EmrB-like"/>
</dbReference>
<dbReference type="InterPro" id="IPR011701">
    <property type="entry name" value="MFS"/>
</dbReference>
<dbReference type="InterPro" id="IPR020846">
    <property type="entry name" value="MFS_dom"/>
</dbReference>
<dbReference type="InterPro" id="IPR036259">
    <property type="entry name" value="MFS_trans_sf"/>
</dbReference>
<dbReference type="InterPro" id="IPR023721">
    <property type="entry name" value="Multi-R_MdtD"/>
</dbReference>
<dbReference type="NCBIfam" id="TIGR00711">
    <property type="entry name" value="efflux_EmrB"/>
    <property type="match status" value="1"/>
</dbReference>
<dbReference type="NCBIfam" id="NF007799">
    <property type="entry name" value="PRK10504.1"/>
    <property type="match status" value="1"/>
</dbReference>
<dbReference type="PANTHER" id="PTHR42718:SF46">
    <property type="entry name" value="BLR6921 PROTEIN"/>
    <property type="match status" value="1"/>
</dbReference>
<dbReference type="PANTHER" id="PTHR42718">
    <property type="entry name" value="MAJOR FACILITATOR SUPERFAMILY MULTIDRUG TRANSPORTER MFSC"/>
    <property type="match status" value="1"/>
</dbReference>
<dbReference type="Pfam" id="PF07690">
    <property type="entry name" value="MFS_1"/>
    <property type="match status" value="1"/>
</dbReference>
<dbReference type="PRINTS" id="PR01036">
    <property type="entry name" value="TCRTETB"/>
</dbReference>
<dbReference type="SUPFAM" id="SSF103473">
    <property type="entry name" value="MFS general substrate transporter"/>
    <property type="match status" value="1"/>
</dbReference>
<dbReference type="PROSITE" id="PS50850">
    <property type="entry name" value="MFS"/>
    <property type="match status" value="1"/>
</dbReference>